<sequence>MGRAKKVVLAYSGGVDTSVCIPYLMHEWGVEEVITLAADLGQGDELGPIQEKALRCGAVESLVIDGKEEFVKEYAFRSIQANALYENRYPLSTALARPLIAKMLVEAAEKYGADAVAHGCTGKGNDQVRFDISIMALNPNLKVLAPAREWKMSREETIAYGERYGVESPVKKSSPYSIDRNILGRSIEAGPLEDPMTEPTEEIYLMTKAIADTPDEPEYVDIGFEKGIPVSLNGVMLDPVTLVERLNEIAGNHGVGRLDMVENRVVGIKSREIYEAPALLVLIDAHRDLESLTQTADVTHYKNTVEEIYSQLIYRGLWYSPLKEALDAFIVKTQERVTGMVRVKFFKGNANVAGRKSDYSIYDAELATYGMEDQFDHKAAEGFIYIWGLPTKVWAQKMRG</sequence>
<reference key="1">
    <citation type="journal article" date="1996" name="DNA Res.">
        <title>Sequence analysis of the genome of the unicellular cyanobacterium Synechocystis sp. strain PCC6803. II. Sequence determination of the entire genome and assignment of potential protein-coding regions.</title>
        <authorList>
            <person name="Kaneko T."/>
            <person name="Sato S."/>
            <person name="Kotani H."/>
            <person name="Tanaka A."/>
            <person name="Asamizu E."/>
            <person name="Nakamura Y."/>
            <person name="Miyajima N."/>
            <person name="Hirosawa M."/>
            <person name="Sugiura M."/>
            <person name="Sasamoto S."/>
            <person name="Kimura T."/>
            <person name="Hosouchi T."/>
            <person name="Matsuno A."/>
            <person name="Muraki A."/>
            <person name="Nakazaki N."/>
            <person name="Naruo K."/>
            <person name="Okumura S."/>
            <person name="Shimpo S."/>
            <person name="Takeuchi C."/>
            <person name="Wada T."/>
            <person name="Watanabe A."/>
            <person name="Yamada M."/>
            <person name="Yasuda M."/>
            <person name="Tabata S."/>
        </authorList>
    </citation>
    <scope>NUCLEOTIDE SEQUENCE [LARGE SCALE GENOMIC DNA]</scope>
    <source>
        <strain>ATCC 27184 / PCC 6803 / Kazusa</strain>
    </source>
</reference>
<reference key="2">
    <citation type="journal article" date="2024" name="Plant Mol. Biol.">
        <title>Arginine inhibits the arginine biosynthesis rate-limiting enzyme and leads to the accumulation of intracellular aspartate in Synechocystis sp. PCC 6803.</title>
        <authorList>
            <person name="Katayama N."/>
            <person name="Osanai T."/>
        </authorList>
    </citation>
    <scope>FUNCTION</scope>
    <scope>CATALYTIC ACTIVITY</scope>
    <scope>ACTIVITY REGULATION</scope>
    <scope>BIOPHYSICOCHEMICAL PROPERTIES</scope>
    <scope>OVEREXPRESSION</scope>
    <source>
        <strain>ATCC 27184 / PCC 6803 / Kazusa</strain>
    </source>
</reference>
<gene>
    <name evidence="1 3" type="primary">argG</name>
    <name type="ordered locus">slr0585</name>
</gene>
<keyword id="KW-0028">Amino-acid biosynthesis</keyword>
<keyword id="KW-0055">Arginine biosynthesis</keyword>
<keyword id="KW-0067">ATP-binding</keyword>
<keyword id="KW-0963">Cytoplasm</keyword>
<keyword id="KW-0436">Ligase</keyword>
<keyword id="KW-0547">Nucleotide-binding</keyword>
<keyword id="KW-1185">Reference proteome</keyword>
<evidence type="ECO:0000255" key="1">
    <source>
        <dbReference type="HAMAP-Rule" id="MF_00005"/>
    </source>
</evidence>
<evidence type="ECO:0000269" key="2">
    <source>
    </source>
</evidence>
<evidence type="ECO:0000303" key="3">
    <source>
    </source>
</evidence>
<evidence type="ECO:0000305" key="4">
    <source>
    </source>
</evidence>
<name>ASSY_SYNY3</name>
<accession>P77973</accession>
<comment type="function">
    <text evidence="2">Catalyzes the condensation of citrulline and aspartate into argininosuccinate, the immediate precursor of arginine (PubMed:38478146). SyArgG is the rate-limiting step in arginine biosynthesis in Synechocystis PCC 6803 (PubMed:38478146).</text>
</comment>
<comment type="catalytic activity">
    <reaction evidence="1 2">
        <text>L-citrulline + L-aspartate + ATP = 2-(N(omega)-L-arginino)succinate + AMP + diphosphate + H(+)</text>
        <dbReference type="Rhea" id="RHEA:10932"/>
        <dbReference type="ChEBI" id="CHEBI:15378"/>
        <dbReference type="ChEBI" id="CHEBI:29991"/>
        <dbReference type="ChEBI" id="CHEBI:30616"/>
        <dbReference type="ChEBI" id="CHEBI:33019"/>
        <dbReference type="ChEBI" id="CHEBI:57472"/>
        <dbReference type="ChEBI" id="CHEBI:57743"/>
        <dbReference type="ChEBI" id="CHEBI:456215"/>
        <dbReference type="EC" id="6.3.4.5"/>
    </reaction>
    <physiologicalReaction direction="left-to-right" evidence="2">
        <dbReference type="Rhea" id="RHEA:10933"/>
    </physiologicalReaction>
</comment>
<comment type="activity regulation">
    <text evidence="2">Activity decreases to 53.9% and 18.4% in the presence of 1 mM and 5 mM arginine, respectively (PubMed:38478146). Activity also decreases to 80.1%, 78.1% and 92.1% in the presence of 5 mM ornithine, lysine and succinate, respectively (PubMed:38478146). Activity does not decrease in the presence of glutamate, glutamine or asparagine (PubMed:38478146).</text>
</comment>
<comment type="biophysicochemical properties">
    <kinetics>
        <KM evidence="2">0.35 mM for citrulline (at 38 degrees Celsius and pH 9.0)</KM>
        <KM evidence="2">0.36 mM for aspartate (at 38 degrees Celsius and pH 9.0)</KM>
        <KM evidence="2">0.26 mM for ATP (at 38 degrees Celsius and pH 9.0)</KM>
        <text evidence="2">kcat is 0.69 sec(-1) with citrulline as substrate. kcat is 0.77 sec(-1) with aspartate as substrate. kcat is 0.70 sec(-1) with ATP as substrate.</text>
    </kinetics>
    <temperatureDependence>
        <text evidence="2">Optimum temperature is 35-40 degrees Celsius (PubMed:38478146). Inactivated above 50 degrees Celsius (PubMed:38478146).</text>
    </temperatureDependence>
</comment>
<comment type="pathway">
    <text evidence="1 4">Amino-acid biosynthesis; L-arginine biosynthesis; L-arginine from L-ornithine and carbamoyl phosphate: step 2/3.</text>
</comment>
<comment type="subunit">
    <text evidence="1">Homotetramer.</text>
</comment>
<comment type="interaction">
    <interactant intactId="EBI-862317">
        <id>P77973</id>
    </interactant>
    <interactant intactId="EBI-862916">
        <id>P52231</id>
        <label>trxA</label>
    </interactant>
    <organismsDiffer>false</organismsDiffer>
    <experiments>2</experiments>
</comment>
<comment type="subcellular location">
    <subcellularLocation>
        <location evidence="1">Cytoplasm</location>
    </subcellularLocation>
</comment>
<comment type="miscellaneous">
    <text evidence="2">A mutant overexpressing this enzyme grows faster than the wild-type strain under photoautotrophic conditions with 5 mM NaNO(3) as a nitrogen source (PubMed:38478146). In contrast, the growth of the mutant is similar under photoautotrophic conditions with 5 mM arginine as a nitrogen source (PubMed:38478146).</text>
</comment>
<comment type="similarity">
    <text evidence="1">Belongs to the argininosuccinate synthase family. Type 1 subfamily.</text>
</comment>
<protein>
    <recommendedName>
        <fullName evidence="1">Argininosuccinate synthase</fullName>
        <ecNumber evidence="1 2">6.3.4.5</ecNumber>
    </recommendedName>
    <alternativeName>
        <fullName evidence="3">Argininosuccinate synthetase</fullName>
    </alternativeName>
    <alternativeName>
        <fullName evidence="1">Citrulline--aspartate ligase</fullName>
    </alternativeName>
    <alternativeName>
        <fullName evidence="3">SyArgG</fullName>
    </alternativeName>
</protein>
<organism>
    <name type="scientific">Synechocystis sp. (strain ATCC 27184 / PCC 6803 / Kazusa)</name>
    <dbReference type="NCBI Taxonomy" id="1111708"/>
    <lineage>
        <taxon>Bacteria</taxon>
        <taxon>Bacillati</taxon>
        <taxon>Cyanobacteriota</taxon>
        <taxon>Cyanophyceae</taxon>
        <taxon>Synechococcales</taxon>
        <taxon>Merismopediaceae</taxon>
        <taxon>Synechocystis</taxon>
    </lineage>
</organism>
<feature type="chain" id="PRO_0000148655" description="Argininosuccinate synthase">
    <location>
        <begin position="1"/>
        <end position="400"/>
    </location>
</feature>
<feature type="binding site" evidence="1">
    <location>
        <begin position="10"/>
        <end position="18"/>
    </location>
    <ligand>
        <name>ATP</name>
        <dbReference type="ChEBI" id="CHEBI:30616"/>
    </ligand>
</feature>
<feature type="binding site" evidence="1">
    <location>
        <position position="38"/>
    </location>
    <ligand>
        <name>ATP</name>
        <dbReference type="ChEBI" id="CHEBI:30616"/>
    </ligand>
</feature>
<feature type="binding site" evidence="1">
    <location>
        <position position="89"/>
    </location>
    <ligand>
        <name>L-citrulline</name>
        <dbReference type="ChEBI" id="CHEBI:57743"/>
    </ligand>
</feature>
<feature type="binding site" evidence="1">
    <location>
        <position position="119"/>
    </location>
    <ligand>
        <name>ATP</name>
        <dbReference type="ChEBI" id="CHEBI:30616"/>
    </ligand>
</feature>
<feature type="binding site" evidence="1">
    <location>
        <position position="121"/>
    </location>
    <ligand>
        <name>L-aspartate</name>
        <dbReference type="ChEBI" id="CHEBI:29991"/>
    </ligand>
</feature>
<feature type="binding site" evidence="1">
    <location>
        <position position="125"/>
    </location>
    <ligand>
        <name>L-aspartate</name>
        <dbReference type="ChEBI" id="CHEBI:29991"/>
    </ligand>
</feature>
<feature type="binding site" evidence="1">
    <location>
        <position position="125"/>
    </location>
    <ligand>
        <name>L-citrulline</name>
        <dbReference type="ChEBI" id="CHEBI:57743"/>
    </ligand>
</feature>
<feature type="binding site" evidence="1">
    <location>
        <position position="126"/>
    </location>
    <ligand>
        <name>L-aspartate</name>
        <dbReference type="ChEBI" id="CHEBI:29991"/>
    </ligand>
</feature>
<feature type="binding site" evidence="1">
    <location>
        <position position="129"/>
    </location>
    <ligand>
        <name>L-citrulline</name>
        <dbReference type="ChEBI" id="CHEBI:57743"/>
    </ligand>
</feature>
<feature type="binding site" evidence="1">
    <location>
        <position position="177"/>
    </location>
    <ligand>
        <name>L-citrulline</name>
        <dbReference type="ChEBI" id="CHEBI:57743"/>
    </ligand>
</feature>
<feature type="binding site" evidence="1">
    <location>
        <position position="186"/>
    </location>
    <ligand>
        <name>L-citrulline</name>
        <dbReference type="ChEBI" id="CHEBI:57743"/>
    </ligand>
</feature>
<feature type="binding site" evidence="1">
    <location>
        <position position="262"/>
    </location>
    <ligand>
        <name>L-citrulline</name>
        <dbReference type="ChEBI" id="CHEBI:57743"/>
    </ligand>
</feature>
<feature type="binding site" evidence="1">
    <location>
        <position position="274"/>
    </location>
    <ligand>
        <name>L-citrulline</name>
        <dbReference type="ChEBI" id="CHEBI:57743"/>
    </ligand>
</feature>
<proteinExistence type="evidence at protein level"/>
<dbReference type="EC" id="6.3.4.5" evidence="1 2"/>
<dbReference type="EMBL" id="BA000022">
    <property type="protein sequence ID" value="BAA18841.1"/>
    <property type="molecule type" value="Genomic_DNA"/>
</dbReference>
<dbReference type="PIR" id="S76929">
    <property type="entry name" value="S76929"/>
</dbReference>
<dbReference type="SMR" id="P77973"/>
<dbReference type="FunCoup" id="P77973">
    <property type="interactions" value="394"/>
</dbReference>
<dbReference type="IntAct" id="P77973">
    <property type="interactions" value="7"/>
</dbReference>
<dbReference type="STRING" id="1148.gene:10500613"/>
<dbReference type="PaxDb" id="1148-1653931"/>
<dbReference type="EnsemblBacteria" id="BAA18841">
    <property type="protein sequence ID" value="BAA18841"/>
    <property type="gene ID" value="BAA18841"/>
</dbReference>
<dbReference type="KEGG" id="syn:slr0585"/>
<dbReference type="eggNOG" id="COG0137">
    <property type="taxonomic scope" value="Bacteria"/>
</dbReference>
<dbReference type="InParanoid" id="P77973"/>
<dbReference type="PhylomeDB" id="P77973"/>
<dbReference type="UniPathway" id="UPA00068">
    <property type="reaction ID" value="UER00113"/>
</dbReference>
<dbReference type="Proteomes" id="UP000001425">
    <property type="component" value="Chromosome"/>
</dbReference>
<dbReference type="GO" id="GO:0005737">
    <property type="term" value="C:cytoplasm"/>
    <property type="evidence" value="ECO:0000318"/>
    <property type="project" value="GO_Central"/>
</dbReference>
<dbReference type="GO" id="GO:0004055">
    <property type="term" value="F:argininosuccinate synthase activity"/>
    <property type="evidence" value="ECO:0000318"/>
    <property type="project" value="GO_Central"/>
</dbReference>
<dbReference type="GO" id="GO:0005524">
    <property type="term" value="F:ATP binding"/>
    <property type="evidence" value="ECO:0007669"/>
    <property type="project" value="UniProtKB-UniRule"/>
</dbReference>
<dbReference type="GO" id="GO:0000053">
    <property type="term" value="P:argininosuccinate metabolic process"/>
    <property type="evidence" value="ECO:0000318"/>
    <property type="project" value="GO_Central"/>
</dbReference>
<dbReference type="GO" id="GO:0006526">
    <property type="term" value="P:L-arginine biosynthetic process"/>
    <property type="evidence" value="ECO:0000318"/>
    <property type="project" value="GO_Central"/>
</dbReference>
<dbReference type="GO" id="GO:0000050">
    <property type="term" value="P:urea cycle"/>
    <property type="evidence" value="ECO:0000318"/>
    <property type="project" value="GO_Central"/>
</dbReference>
<dbReference type="CDD" id="cd01999">
    <property type="entry name" value="ASS"/>
    <property type="match status" value="1"/>
</dbReference>
<dbReference type="FunFam" id="1.20.5.470:FF:000002">
    <property type="entry name" value="Argininosuccinate synthase"/>
    <property type="match status" value="1"/>
</dbReference>
<dbReference type="FunFam" id="3.40.50.620:FF:000038">
    <property type="entry name" value="Argininosuccinate synthase"/>
    <property type="match status" value="1"/>
</dbReference>
<dbReference type="FunFam" id="3.90.1260.10:FF:000007">
    <property type="entry name" value="Argininosuccinate synthase"/>
    <property type="match status" value="1"/>
</dbReference>
<dbReference type="Gene3D" id="3.90.1260.10">
    <property type="entry name" value="Argininosuccinate synthetase, chain A, domain 2"/>
    <property type="match status" value="1"/>
</dbReference>
<dbReference type="Gene3D" id="3.40.50.620">
    <property type="entry name" value="HUPs"/>
    <property type="match status" value="1"/>
</dbReference>
<dbReference type="Gene3D" id="1.20.5.470">
    <property type="entry name" value="Single helix bin"/>
    <property type="match status" value="1"/>
</dbReference>
<dbReference type="HAMAP" id="MF_00005">
    <property type="entry name" value="Arg_succ_synth_type1"/>
    <property type="match status" value="1"/>
</dbReference>
<dbReference type="InterPro" id="IPR048268">
    <property type="entry name" value="Arginosuc_syn_C"/>
</dbReference>
<dbReference type="InterPro" id="IPR048267">
    <property type="entry name" value="Arginosuc_syn_N"/>
</dbReference>
<dbReference type="InterPro" id="IPR001518">
    <property type="entry name" value="Arginosuc_synth"/>
</dbReference>
<dbReference type="InterPro" id="IPR018223">
    <property type="entry name" value="Arginosuc_synth_CS"/>
</dbReference>
<dbReference type="InterPro" id="IPR023434">
    <property type="entry name" value="Arginosuc_synth_type_1_subfam"/>
</dbReference>
<dbReference type="InterPro" id="IPR024074">
    <property type="entry name" value="AS_cat/multimer_dom_body"/>
</dbReference>
<dbReference type="InterPro" id="IPR014729">
    <property type="entry name" value="Rossmann-like_a/b/a_fold"/>
</dbReference>
<dbReference type="NCBIfam" id="TIGR00032">
    <property type="entry name" value="argG"/>
    <property type="match status" value="1"/>
</dbReference>
<dbReference type="NCBIfam" id="NF001770">
    <property type="entry name" value="PRK00509.1"/>
    <property type="match status" value="1"/>
</dbReference>
<dbReference type="PANTHER" id="PTHR11587">
    <property type="entry name" value="ARGININOSUCCINATE SYNTHASE"/>
    <property type="match status" value="1"/>
</dbReference>
<dbReference type="PANTHER" id="PTHR11587:SF2">
    <property type="entry name" value="ARGININOSUCCINATE SYNTHASE"/>
    <property type="match status" value="1"/>
</dbReference>
<dbReference type="Pfam" id="PF20979">
    <property type="entry name" value="Arginosuc_syn_C"/>
    <property type="match status" value="1"/>
</dbReference>
<dbReference type="Pfam" id="PF00764">
    <property type="entry name" value="Arginosuc_synth"/>
    <property type="match status" value="1"/>
</dbReference>
<dbReference type="SUPFAM" id="SSF52402">
    <property type="entry name" value="Adenine nucleotide alpha hydrolases-like"/>
    <property type="match status" value="1"/>
</dbReference>
<dbReference type="SUPFAM" id="SSF69864">
    <property type="entry name" value="Argininosuccinate synthetase, C-terminal domain"/>
    <property type="match status" value="1"/>
</dbReference>
<dbReference type="PROSITE" id="PS00564">
    <property type="entry name" value="ARGININOSUCCIN_SYN_1"/>
    <property type="match status" value="1"/>
</dbReference>
<dbReference type="PROSITE" id="PS00565">
    <property type="entry name" value="ARGININOSUCCIN_SYN_2"/>
    <property type="match status" value="1"/>
</dbReference>